<organism>
    <name type="scientific">Danio rerio</name>
    <name type="common">Zebrafish</name>
    <name type="synonym">Brachydanio rerio</name>
    <dbReference type="NCBI Taxonomy" id="7955"/>
    <lineage>
        <taxon>Eukaryota</taxon>
        <taxon>Metazoa</taxon>
        <taxon>Chordata</taxon>
        <taxon>Craniata</taxon>
        <taxon>Vertebrata</taxon>
        <taxon>Euteleostomi</taxon>
        <taxon>Actinopterygii</taxon>
        <taxon>Neopterygii</taxon>
        <taxon>Teleostei</taxon>
        <taxon>Ostariophysi</taxon>
        <taxon>Cypriniformes</taxon>
        <taxon>Danionidae</taxon>
        <taxon>Danioninae</taxon>
        <taxon>Danio</taxon>
    </lineage>
</organism>
<gene>
    <name type="primary">cwc22</name>
    <name type="synonym">ncm</name>
    <name type="ORF">zgc:153452</name>
</gene>
<feature type="chain" id="PRO_0000302009" description="Pre-mRNA-splicing factor CWC22 homolog">
    <location>
        <begin position="1"/>
        <end position="985"/>
    </location>
</feature>
<feature type="domain" description="MIF4G" evidence="2">
    <location>
        <begin position="257"/>
        <end position="440"/>
    </location>
</feature>
<feature type="domain" description="MI" evidence="2">
    <location>
        <begin position="548"/>
        <end position="664"/>
    </location>
</feature>
<feature type="region of interest" description="Disordered" evidence="3">
    <location>
        <begin position="1"/>
        <end position="225"/>
    </location>
</feature>
<feature type="region of interest" description="Disordered" evidence="3">
    <location>
        <begin position="497"/>
        <end position="534"/>
    </location>
</feature>
<feature type="region of interest" description="Disordered" evidence="3">
    <location>
        <begin position="752"/>
        <end position="985"/>
    </location>
</feature>
<feature type="compositionally biased region" description="Polar residues" evidence="3">
    <location>
        <begin position="1"/>
        <end position="11"/>
    </location>
</feature>
<feature type="compositionally biased region" description="Basic and acidic residues" evidence="3">
    <location>
        <begin position="18"/>
        <end position="32"/>
    </location>
</feature>
<feature type="compositionally biased region" description="Acidic residues" evidence="3">
    <location>
        <begin position="86"/>
        <end position="95"/>
    </location>
</feature>
<feature type="compositionally biased region" description="Basic and acidic residues" evidence="3">
    <location>
        <begin position="110"/>
        <end position="129"/>
    </location>
</feature>
<feature type="compositionally biased region" description="Basic residues" evidence="3">
    <location>
        <begin position="130"/>
        <end position="161"/>
    </location>
</feature>
<feature type="compositionally biased region" description="Basic and acidic residues" evidence="3">
    <location>
        <begin position="162"/>
        <end position="187"/>
    </location>
</feature>
<feature type="compositionally biased region" description="Basic and acidic residues" evidence="3">
    <location>
        <begin position="195"/>
        <end position="209"/>
    </location>
</feature>
<feature type="compositionally biased region" description="Acidic residues" evidence="3">
    <location>
        <begin position="501"/>
        <end position="531"/>
    </location>
</feature>
<feature type="compositionally biased region" description="Low complexity" evidence="3">
    <location>
        <begin position="758"/>
        <end position="780"/>
    </location>
</feature>
<feature type="compositionally biased region" description="Acidic residues" evidence="3">
    <location>
        <begin position="781"/>
        <end position="791"/>
    </location>
</feature>
<feature type="compositionally biased region" description="Low complexity" evidence="3">
    <location>
        <begin position="792"/>
        <end position="804"/>
    </location>
</feature>
<feature type="compositionally biased region" description="Basic residues" evidence="3">
    <location>
        <begin position="808"/>
        <end position="826"/>
    </location>
</feature>
<feature type="compositionally biased region" description="Basic and acidic residues" evidence="3">
    <location>
        <begin position="846"/>
        <end position="871"/>
    </location>
</feature>
<feature type="compositionally biased region" description="Basic and acidic residues" evidence="3">
    <location>
        <begin position="879"/>
        <end position="954"/>
    </location>
</feature>
<feature type="compositionally biased region" description="Basic and acidic residues" evidence="3">
    <location>
        <begin position="961"/>
        <end position="979"/>
    </location>
</feature>
<proteinExistence type="evidence at transcript level"/>
<accession>Q08C72</accession>
<name>CWC22_DANRE</name>
<evidence type="ECO:0000250" key="1">
    <source>
        <dbReference type="UniProtKB" id="Q9HCG8"/>
    </source>
</evidence>
<evidence type="ECO:0000255" key="2">
    <source>
        <dbReference type="PROSITE-ProRule" id="PRU00698"/>
    </source>
</evidence>
<evidence type="ECO:0000256" key="3">
    <source>
        <dbReference type="SAM" id="MobiDB-lite"/>
    </source>
</evidence>
<evidence type="ECO:0000305" key="4"/>
<comment type="function">
    <text evidence="1">Required for pre-mRNA splicing as component of the spliceosome. Promotes exon-junction complex (EJC) assembly.</text>
</comment>
<comment type="subunit">
    <text evidence="1">Component of the pre-catalytic spliceosome B and the catalytic spliceosome C complexes. Component of the minor spliceosome, which splices U12-type introns (By similarity).</text>
</comment>
<comment type="subcellular location">
    <subcellularLocation>
        <location evidence="1">Nucleus</location>
    </subcellularLocation>
    <subcellularLocation>
        <location evidence="1">Nucleus speckle</location>
    </subcellularLocation>
    <text evidence="1">Concentrates around speckles, which are sites of pre-mRNA synthesis and processing, where it colocalizes with EJC core proteins.</text>
</comment>
<comment type="similarity">
    <text evidence="4">Belongs to the CWC22 family.</text>
</comment>
<sequence>MAAESNDSQKAMNLGPTLRDEPPSTEEIEQRQRKASTSSSEDGEHEDNDRRRVVGSPGSRDGSPRVGSPVARASPRAKRDQKSSDSDSDSSDSDDGVMRKIRSSVMHIRRTSDEETKNRERSSSPDRHEKKSKSRSRSRSRSRSRSRSRSPRERYRRARRSRERERDRYGDRERYERRSSRERDWEHRRRGRSASPDKNDKPPTEEPPVKKRKETLDPILTRTGGAYIPPAKLRMMQAQITDKSSLEYQRMSWEALKKSINGLINKVNVSNIANIIQELLQENIVRGRGLLARSILQAQAASPIFTHVYSAVVAIINSKFPQIGELILKRLILNFRKGYRRNDKQQCLTASKFVGHLINQNVAHEVLCLEMLTLLLERPTDDSVEVAISFLKECGLKLTEVSPRGINAIFERLRNILHESEIDKRVQYMIEVMFAIRKDGFKDHPIIPEGLDLVEEEDQFTHMLPLEDEYNTEDILNVFKLDPNFLENEEKYKTIKREILDEGSSDSGDDAGGSGDDEDDDEEDEEAAAGEEQEKVTIFDQTEVNLVAFRRTIYLAIQSSLDFEECAHKLIKMDFPESQTKELCNMILDCCAQQRTYEKFFGLLAGRFCLLKKEYMESFEAIFQEQYETIHRLETNKLRNVARIFAHLLYTDSVPWSVLECVRMSEDTTTSSSRIFVKILFQELCAYMGLPKLNERLKDTTLQPFFEGLFPRDNPRNTRFAINFFTSIGLGGLTDELREHLKNAPKMIMTQNQEVESSDSSSSSSSSSDSSSSSGSSSESDSSESDSDSSSDSDSSSSSGSSSDSDSRRKKASGKKKDKSKSKKSSKAANQRSPLEERPTKRHENRRQDASKEDRRGSDKHNRDPQRRGQQDESPPARPRGEPERIRGQKEPHRHAQDHQDRPTDSGRHKDDGKNSRVNKDKDRRRSREKEPLRRSRDRSKSRERSRKEMDSRDSYGNGLERADKENRHSDRYKESRRKDDRRHR</sequence>
<reference key="1">
    <citation type="submission" date="2006-09" db="EMBL/GenBank/DDBJ databases">
        <authorList>
            <consortium name="NIH - Zebrafish Gene Collection (ZGC) project"/>
        </authorList>
    </citation>
    <scope>NUCLEOTIDE SEQUENCE [LARGE SCALE MRNA]</scope>
    <source>
        <strain>AB</strain>
    </source>
</reference>
<keyword id="KW-0507">mRNA processing</keyword>
<keyword id="KW-0508">mRNA splicing</keyword>
<keyword id="KW-0539">Nucleus</keyword>
<keyword id="KW-1185">Reference proteome</keyword>
<keyword id="KW-0747">Spliceosome</keyword>
<dbReference type="EMBL" id="BC124357">
    <property type="protein sequence ID" value="AAI24358.1"/>
    <property type="molecule type" value="mRNA"/>
</dbReference>
<dbReference type="SMR" id="Q08C72"/>
<dbReference type="FunCoup" id="Q08C72">
    <property type="interactions" value="2295"/>
</dbReference>
<dbReference type="STRING" id="7955.ENSDARP00000013971"/>
<dbReference type="PaxDb" id="7955-ENSDARP00000013971"/>
<dbReference type="AGR" id="ZFIN:ZDB-GENE-060929-452"/>
<dbReference type="ZFIN" id="ZDB-GENE-060929-452">
    <property type="gene designation" value="cwc22"/>
</dbReference>
<dbReference type="eggNOG" id="KOG2140">
    <property type="taxonomic scope" value="Eukaryota"/>
</dbReference>
<dbReference type="InParanoid" id="Q08C72"/>
<dbReference type="PhylomeDB" id="Q08C72"/>
<dbReference type="Reactome" id="R-DRE-72163">
    <property type="pathway name" value="mRNA Splicing - Major Pathway"/>
</dbReference>
<dbReference type="PRO" id="PR:Q08C72"/>
<dbReference type="Proteomes" id="UP000000437">
    <property type="component" value="Unplaced"/>
</dbReference>
<dbReference type="GO" id="GO:0071013">
    <property type="term" value="C:catalytic step 2 spliceosome"/>
    <property type="evidence" value="ECO:0000318"/>
    <property type="project" value="GO_Central"/>
</dbReference>
<dbReference type="GO" id="GO:0016607">
    <property type="term" value="C:nuclear speck"/>
    <property type="evidence" value="ECO:0007669"/>
    <property type="project" value="UniProtKB-SubCell"/>
</dbReference>
<dbReference type="GO" id="GO:0005634">
    <property type="term" value="C:nucleus"/>
    <property type="evidence" value="ECO:0000250"/>
    <property type="project" value="UniProtKB"/>
</dbReference>
<dbReference type="GO" id="GO:0005681">
    <property type="term" value="C:spliceosomal complex"/>
    <property type="evidence" value="ECO:0000250"/>
    <property type="project" value="UniProtKB"/>
</dbReference>
<dbReference type="GO" id="GO:0071006">
    <property type="term" value="C:U2-type catalytic step 1 spliceosome"/>
    <property type="evidence" value="ECO:0000250"/>
    <property type="project" value="UniProtKB"/>
</dbReference>
<dbReference type="GO" id="GO:0071007">
    <property type="term" value="C:U2-type catalytic step 2 spliceosome"/>
    <property type="evidence" value="ECO:0000250"/>
    <property type="project" value="UniProtKB"/>
</dbReference>
<dbReference type="GO" id="GO:0071005">
    <property type="term" value="C:U2-type precatalytic spliceosome"/>
    <property type="evidence" value="ECO:0000250"/>
    <property type="project" value="UniProtKB"/>
</dbReference>
<dbReference type="GO" id="GO:0003723">
    <property type="term" value="F:RNA binding"/>
    <property type="evidence" value="ECO:0000250"/>
    <property type="project" value="UniProtKB"/>
</dbReference>
<dbReference type="GO" id="GO:0000398">
    <property type="term" value="P:mRNA splicing, via spliceosome"/>
    <property type="evidence" value="ECO:0000250"/>
    <property type="project" value="UniProtKB"/>
</dbReference>
<dbReference type="FunFam" id="1.25.40.180:FF:000004">
    <property type="entry name" value="pre-mRNA-splicing factor CWC22 homolog"/>
    <property type="match status" value="1"/>
</dbReference>
<dbReference type="Gene3D" id="1.25.40.180">
    <property type="match status" value="1"/>
</dbReference>
<dbReference type="InterPro" id="IPR016024">
    <property type="entry name" value="ARM-type_fold"/>
</dbReference>
<dbReference type="InterPro" id="IPR050781">
    <property type="entry name" value="CWC22_splicing_factor"/>
</dbReference>
<dbReference type="InterPro" id="IPR003891">
    <property type="entry name" value="Initiation_fac_eIF4g_MI"/>
</dbReference>
<dbReference type="InterPro" id="IPR003890">
    <property type="entry name" value="MIF4G-like_typ-3"/>
</dbReference>
<dbReference type="PANTHER" id="PTHR18034">
    <property type="entry name" value="CELL CYCLE CONTROL PROTEIN CWF22-RELATED"/>
    <property type="match status" value="1"/>
</dbReference>
<dbReference type="PANTHER" id="PTHR18034:SF3">
    <property type="entry name" value="PRE-MRNA-SPLICING FACTOR CWC22 HOMOLOG"/>
    <property type="match status" value="1"/>
</dbReference>
<dbReference type="Pfam" id="PF02847">
    <property type="entry name" value="MA3"/>
    <property type="match status" value="1"/>
</dbReference>
<dbReference type="Pfam" id="PF02854">
    <property type="entry name" value="MIF4G"/>
    <property type="match status" value="1"/>
</dbReference>
<dbReference type="SMART" id="SM00544">
    <property type="entry name" value="MA3"/>
    <property type="match status" value="1"/>
</dbReference>
<dbReference type="SMART" id="SM00543">
    <property type="entry name" value="MIF4G"/>
    <property type="match status" value="1"/>
</dbReference>
<dbReference type="SUPFAM" id="SSF48371">
    <property type="entry name" value="ARM repeat"/>
    <property type="match status" value="1"/>
</dbReference>
<dbReference type="PROSITE" id="PS51366">
    <property type="entry name" value="MI"/>
    <property type="match status" value="1"/>
</dbReference>
<protein>
    <recommendedName>
        <fullName>Pre-mRNA-splicing factor CWC22 homolog</fullName>
    </recommendedName>
    <alternativeName>
        <fullName>Nucampholin homolog</fullName>
    </alternativeName>
</protein>